<proteinExistence type="evidence at protein level"/>
<organism>
    <name type="scientific">Saccharomyces cerevisiae (strain ATCC 204508 / S288c)</name>
    <name type="common">Baker's yeast</name>
    <dbReference type="NCBI Taxonomy" id="559292"/>
    <lineage>
        <taxon>Eukaryota</taxon>
        <taxon>Fungi</taxon>
        <taxon>Dikarya</taxon>
        <taxon>Ascomycota</taxon>
        <taxon>Saccharomycotina</taxon>
        <taxon>Saccharomycetes</taxon>
        <taxon>Saccharomycetales</taxon>
        <taxon>Saccharomycetaceae</taxon>
        <taxon>Saccharomyces</taxon>
    </lineage>
</organism>
<accession>Q03433</accession>
<accession>D6VZD4</accession>
<keyword id="KW-0002">3D-structure</keyword>
<keyword id="KW-0156">Chromatin regulator</keyword>
<keyword id="KW-0479">Metal-binding</keyword>
<keyword id="KW-0539">Nucleus</keyword>
<keyword id="KW-1185">Reference proteome</keyword>
<keyword id="KW-0862">Zinc</keyword>
<keyword id="KW-0863">Zinc-finger</keyword>
<reference key="1">
    <citation type="journal article" date="1997" name="Nature">
        <title>The nucleotide sequence of Saccharomyces cerevisiae chromosome XIII.</title>
        <authorList>
            <person name="Bowman S."/>
            <person name="Churcher C.M."/>
            <person name="Badcock K."/>
            <person name="Brown D."/>
            <person name="Chillingworth T."/>
            <person name="Connor R."/>
            <person name="Dedman K."/>
            <person name="Devlin K."/>
            <person name="Gentles S."/>
            <person name="Hamlin N."/>
            <person name="Hunt S."/>
            <person name="Jagels K."/>
            <person name="Lye G."/>
            <person name="Moule S."/>
            <person name="Odell C."/>
            <person name="Pearson D."/>
            <person name="Rajandream M.A."/>
            <person name="Rice P."/>
            <person name="Skelton J."/>
            <person name="Walsh S.V."/>
            <person name="Whitehead S."/>
            <person name="Barrell B.G."/>
        </authorList>
    </citation>
    <scope>NUCLEOTIDE SEQUENCE [LARGE SCALE GENOMIC DNA]</scope>
    <source>
        <strain>ATCC 204508 / S288c</strain>
    </source>
</reference>
<reference key="2">
    <citation type="journal article" date="2014" name="G3 (Bethesda)">
        <title>The reference genome sequence of Saccharomyces cerevisiae: Then and now.</title>
        <authorList>
            <person name="Engel S.R."/>
            <person name="Dietrich F.S."/>
            <person name="Fisk D.G."/>
            <person name="Binkley G."/>
            <person name="Balakrishnan R."/>
            <person name="Costanzo M.C."/>
            <person name="Dwight S.S."/>
            <person name="Hitz B.C."/>
            <person name="Karra K."/>
            <person name="Nash R.S."/>
            <person name="Weng S."/>
            <person name="Wong E.D."/>
            <person name="Lloyd P."/>
            <person name="Skrzypek M.S."/>
            <person name="Miyasato S.R."/>
            <person name="Simison M."/>
            <person name="Cherry J.M."/>
        </authorList>
    </citation>
    <scope>GENOME REANNOTATION</scope>
    <source>
        <strain>ATCC 204508 / S288c</strain>
    </source>
</reference>
<reference key="3">
    <citation type="journal article" date="2002" name="Mol. Biol. Cell">
        <title>Genomic screen for vacuolar protein sorting genes in Saccharomyces cerevisiae.</title>
        <authorList>
            <person name="Bonangelino C.J."/>
            <person name="Chavez E.M."/>
            <person name="Bonifacino J.S."/>
        </authorList>
    </citation>
    <scope>FUNCTION</scope>
</reference>
<reference key="4">
    <citation type="journal article" date="2003" name="Mol. Cell">
        <title>A Snf2 family ATPase complex required for recruitment of the histone H2A variant Htz1.</title>
        <authorList>
            <person name="Krogan N.J."/>
            <person name="Keogh M.-C."/>
            <person name="Datta N."/>
            <person name="Sawa C."/>
            <person name="Ryan O.W."/>
            <person name="Ding H."/>
            <person name="Haw R.A."/>
            <person name="Pootoolal J."/>
            <person name="Tong A."/>
            <person name="Canadien V."/>
            <person name="Richards D.P."/>
            <person name="Wu X."/>
            <person name="Emili A."/>
            <person name="Hughes T.R."/>
            <person name="Buratowski S."/>
            <person name="Greenblatt J.F."/>
        </authorList>
    </citation>
    <scope>FUNCTION</scope>
    <scope>INTERACTION WITH ACT1; ARP4; RVB1; RVB2; ARP6; YAF9; VPS72; SWC3; SWC4; SWC5; SWR1 AND HTZ1</scope>
</reference>
<reference key="5">
    <citation type="journal article" date="2003" name="Nature">
        <title>Global analysis of protein localization in budding yeast.</title>
        <authorList>
            <person name="Huh W.-K."/>
            <person name="Falvo J.V."/>
            <person name="Gerke L.C."/>
            <person name="Carroll A.S."/>
            <person name="Howson R.W."/>
            <person name="Weissman J.S."/>
            <person name="O'Shea E.K."/>
        </authorList>
    </citation>
    <scope>SUBCELLULAR LOCATION [LARGE SCALE ANALYSIS]</scope>
</reference>
<reference key="6">
    <citation type="journal article" date="2004" name="Science">
        <title>ATP-driven exchange of histone H2AZ variant catalyzed by SWR1 chromatin remodeling complex.</title>
        <authorList>
            <person name="Mizuguchi G."/>
            <person name="Shen X."/>
            <person name="Landry J."/>
            <person name="Wu W.-H."/>
            <person name="Sen S."/>
            <person name="Wu C."/>
        </authorList>
    </citation>
    <scope>FUNCTION</scope>
    <scope>INTERACTION WITH ACT1; ARP4; RVB1; RVB2; ARP6; YAF9; VPS72; SWC3; SWC4; SWC5; SWR1 AND HTZ1</scope>
</reference>
<reference key="7">
    <citation type="journal article" date="2004" name="PLoS Biol.">
        <title>A protein complex containing the conserved Swi2/Snf2-related ATPase Swr1p deposits histone variant H2A.Z into euchromatin.</title>
        <authorList>
            <person name="Kobor M.S."/>
            <person name="Venkatasubrahmanyam S."/>
            <person name="Meneghini M.D."/>
            <person name="Gin J.W."/>
            <person name="Jennings J.L."/>
            <person name="Link A.J."/>
            <person name="Madhani H.D."/>
            <person name="Rine J."/>
        </authorList>
    </citation>
    <scope>FUNCTION</scope>
    <scope>INTERACTION WITH ACT1; ARP4; RVB1; RVB2; ARP6; YAF9; VPS72; SWC3; SWC4; SWC5; SWR1 AND HTZ1</scope>
</reference>
<evidence type="ECO:0000255" key="1">
    <source>
        <dbReference type="PROSITE-ProRule" id="PRU00453"/>
    </source>
</evidence>
<evidence type="ECO:0000256" key="2">
    <source>
        <dbReference type="SAM" id="MobiDB-lite"/>
    </source>
</evidence>
<evidence type="ECO:0000269" key="3">
    <source>
    </source>
</evidence>
<evidence type="ECO:0000269" key="4">
    <source>
    </source>
</evidence>
<evidence type="ECO:0000269" key="5">
    <source>
    </source>
</evidence>
<evidence type="ECO:0000269" key="6">
    <source>
    </source>
</evidence>
<evidence type="ECO:0000269" key="7">
    <source>
    </source>
</evidence>
<feature type="chain" id="PRO_0000173557" description="Vacuolar protein sorting-associated protein 71">
    <location>
        <begin position="1"/>
        <end position="280"/>
    </location>
</feature>
<feature type="zinc finger region" description="HIT-type" evidence="1">
    <location>
        <begin position="244"/>
        <end position="277"/>
    </location>
</feature>
<feature type="region of interest" description="Disordered" evidence="2">
    <location>
        <begin position="64"/>
        <end position="92"/>
    </location>
</feature>
<feature type="compositionally biased region" description="Polar residues" evidence="2">
    <location>
        <begin position="64"/>
        <end position="73"/>
    </location>
</feature>
<feature type="compositionally biased region" description="Basic and acidic residues" evidence="2">
    <location>
        <begin position="74"/>
        <end position="92"/>
    </location>
</feature>
<feature type="binding site" evidence="1">
    <location>
        <position position="244"/>
    </location>
    <ligand>
        <name>Zn(2+)</name>
        <dbReference type="ChEBI" id="CHEBI:29105"/>
        <label>1</label>
    </ligand>
</feature>
<feature type="binding site" evidence="1">
    <location>
        <position position="247"/>
    </location>
    <ligand>
        <name>Zn(2+)</name>
        <dbReference type="ChEBI" id="CHEBI:29105"/>
        <label>1</label>
    </ligand>
</feature>
<feature type="binding site" evidence="1">
    <location>
        <position position="256"/>
    </location>
    <ligand>
        <name>Zn(2+)</name>
        <dbReference type="ChEBI" id="CHEBI:29105"/>
        <label>2</label>
    </ligand>
</feature>
<feature type="binding site" evidence="1">
    <location>
        <position position="259"/>
    </location>
    <ligand>
        <name>Zn(2+)</name>
        <dbReference type="ChEBI" id="CHEBI:29105"/>
        <label>2</label>
    </ligand>
</feature>
<feature type="binding site" evidence="1">
    <location>
        <position position="264"/>
    </location>
    <ligand>
        <name>Zn(2+)</name>
        <dbReference type="ChEBI" id="CHEBI:29105"/>
        <label>1</label>
    </ligand>
</feature>
<feature type="binding site" evidence="1">
    <location>
        <position position="268"/>
    </location>
    <ligand>
        <name>Zn(2+)</name>
        <dbReference type="ChEBI" id="CHEBI:29105"/>
        <label>1</label>
    </ligand>
</feature>
<feature type="binding site" evidence="1">
    <location>
        <position position="272"/>
    </location>
    <ligand>
        <name>Zn(2+)</name>
        <dbReference type="ChEBI" id="CHEBI:29105"/>
        <label>2</label>
    </ligand>
</feature>
<feature type="binding site" evidence="1">
    <location>
        <position position="277"/>
    </location>
    <ligand>
        <name>Zn(2+)</name>
        <dbReference type="ChEBI" id="CHEBI:29105"/>
        <label>2</label>
    </ligand>
</feature>
<dbReference type="EMBL" id="Z48430">
    <property type="protein sequence ID" value="CAA88328.1"/>
    <property type="molecule type" value="Genomic_DNA"/>
</dbReference>
<dbReference type="EMBL" id="BK006946">
    <property type="protein sequence ID" value="DAA09858.1"/>
    <property type="molecule type" value="Genomic_DNA"/>
</dbReference>
<dbReference type="PIR" id="S52479">
    <property type="entry name" value="S52479"/>
</dbReference>
<dbReference type="RefSeq" id="NP_013671.1">
    <property type="nucleotide sequence ID" value="NM_001182399.1"/>
</dbReference>
<dbReference type="PDB" id="6GEJ">
    <property type="method" value="EM"/>
    <property type="resolution" value="3.60 A"/>
    <property type="chains" value="S=1-280"/>
</dbReference>
<dbReference type="PDB" id="6GEN">
    <property type="method" value="EM"/>
    <property type="resolution" value="3.60 A"/>
    <property type="chains" value="S=1-280"/>
</dbReference>
<dbReference type="PDB" id="8QKU">
    <property type="method" value="EM"/>
    <property type="resolution" value="3.80 A"/>
    <property type="chains" value="S=1-280"/>
</dbReference>
<dbReference type="PDB" id="8QKV">
    <property type="method" value="EM"/>
    <property type="resolution" value="4.70 A"/>
    <property type="chains" value="S=1-280"/>
</dbReference>
<dbReference type="PDB" id="8QYV">
    <property type="method" value="EM"/>
    <property type="resolution" value="3.50 A"/>
    <property type="chains" value="S=1-280"/>
</dbReference>
<dbReference type="PDB" id="8QZ0">
    <property type="method" value="EM"/>
    <property type="resolution" value="3.80 A"/>
    <property type="chains" value="S=1-280"/>
</dbReference>
<dbReference type="PDB" id="9B1D">
    <property type="method" value="EM"/>
    <property type="resolution" value="3.30 A"/>
    <property type="chains" value="D=1-280"/>
</dbReference>
<dbReference type="PDB" id="9B1E">
    <property type="method" value="EM"/>
    <property type="resolution" value="4.40 A"/>
    <property type="chains" value="D=1-280"/>
</dbReference>
<dbReference type="PDB" id="9FBW">
    <property type="method" value="EM"/>
    <property type="resolution" value="4.40 A"/>
    <property type="chains" value="S=1-280"/>
</dbReference>
<dbReference type="PDBsum" id="6GEJ"/>
<dbReference type="PDBsum" id="6GEN"/>
<dbReference type="PDBsum" id="8QKU"/>
<dbReference type="PDBsum" id="8QKV"/>
<dbReference type="PDBsum" id="8QYV"/>
<dbReference type="PDBsum" id="8QZ0"/>
<dbReference type="PDBsum" id="9B1D"/>
<dbReference type="PDBsum" id="9B1E"/>
<dbReference type="PDBsum" id="9FBW"/>
<dbReference type="EMDB" id="EMD-18471"/>
<dbReference type="EMDB" id="EMD-18472"/>
<dbReference type="EMDB" id="EMD-18764"/>
<dbReference type="EMDB" id="EMD-18769"/>
<dbReference type="EMDB" id="EMD-4395"/>
<dbReference type="EMDB" id="EMD-4396"/>
<dbReference type="EMDB" id="EMD-44074"/>
<dbReference type="EMDB" id="EMD-44075"/>
<dbReference type="EMDB" id="EMD-50297"/>
<dbReference type="SMR" id="Q03433"/>
<dbReference type="BioGRID" id="35128">
    <property type="interactions" value="736"/>
</dbReference>
<dbReference type="ComplexPortal" id="CPX-2122">
    <property type="entry name" value="Swr1 chromatin remodelling complex"/>
</dbReference>
<dbReference type="DIP" id="DIP-4074N"/>
<dbReference type="FunCoup" id="Q03433">
    <property type="interactions" value="144"/>
</dbReference>
<dbReference type="IntAct" id="Q03433">
    <property type="interactions" value="20"/>
</dbReference>
<dbReference type="MINT" id="Q03433"/>
<dbReference type="STRING" id="4932.YML041C"/>
<dbReference type="iPTMnet" id="Q03433"/>
<dbReference type="PaxDb" id="4932-YML041C"/>
<dbReference type="PeptideAtlas" id="Q03433"/>
<dbReference type="EnsemblFungi" id="YML041C_mRNA">
    <property type="protein sequence ID" value="YML041C"/>
    <property type="gene ID" value="YML041C"/>
</dbReference>
<dbReference type="GeneID" id="854966"/>
<dbReference type="KEGG" id="sce:YML041C"/>
<dbReference type="AGR" id="SGD:S000004505"/>
<dbReference type="SGD" id="S000004505">
    <property type="gene designation" value="VPS71"/>
</dbReference>
<dbReference type="VEuPathDB" id="FungiDB:YML041C"/>
<dbReference type="eggNOG" id="KOG3362">
    <property type="taxonomic scope" value="Eukaryota"/>
</dbReference>
<dbReference type="GeneTree" id="ENSGT00390000018426"/>
<dbReference type="HOGENOM" id="CLU_099156_0_0_1"/>
<dbReference type="InParanoid" id="Q03433"/>
<dbReference type="OMA" id="RFMELDT"/>
<dbReference type="OrthoDB" id="74807at2759"/>
<dbReference type="BioCyc" id="YEAST:G3O-32640-MONOMER"/>
<dbReference type="BioGRID-ORCS" id="854966">
    <property type="hits" value="7 hits in 10 CRISPR screens"/>
</dbReference>
<dbReference type="PRO" id="PR:Q03433"/>
<dbReference type="Proteomes" id="UP000002311">
    <property type="component" value="Chromosome XIII"/>
</dbReference>
<dbReference type="RNAct" id="Q03433">
    <property type="molecule type" value="protein"/>
</dbReference>
<dbReference type="GO" id="GO:0000785">
    <property type="term" value="C:chromatin"/>
    <property type="evidence" value="ECO:0000314"/>
    <property type="project" value="ComplexPortal"/>
</dbReference>
<dbReference type="GO" id="GO:0005634">
    <property type="term" value="C:nucleus"/>
    <property type="evidence" value="ECO:0007005"/>
    <property type="project" value="SGD"/>
</dbReference>
<dbReference type="GO" id="GO:0000812">
    <property type="term" value="C:Swr1 complex"/>
    <property type="evidence" value="ECO:0000314"/>
    <property type="project" value="SGD"/>
</dbReference>
<dbReference type="GO" id="GO:0031491">
    <property type="term" value="F:nucleosome binding"/>
    <property type="evidence" value="ECO:0000315"/>
    <property type="project" value="SGD"/>
</dbReference>
<dbReference type="GO" id="GO:0008270">
    <property type="term" value="F:zinc ion binding"/>
    <property type="evidence" value="ECO:0007669"/>
    <property type="project" value="UniProtKB-KW"/>
</dbReference>
<dbReference type="GO" id="GO:0006338">
    <property type="term" value="P:chromatin remodeling"/>
    <property type="evidence" value="ECO:0000314"/>
    <property type="project" value="SGD"/>
</dbReference>
<dbReference type="GO" id="GO:0006623">
    <property type="term" value="P:protein targeting to vacuole"/>
    <property type="evidence" value="ECO:0007001"/>
    <property type="project" value="SGD"/>
</dbReference>
<dbReference type="GO" id="GO:0006355">
    <property type="term" value="P:regulation of DNA-templated transcription"/>
    <property type="evidence" value="ECO:0000303"/>
    <property type="project" value="ComplexPortal"/>
</dbReference>
<dbReference type="CDD" id="cd21437">
    <property type="entry name" value="zf-HIT_ZNHIT1_like"/>
    <property type="match status" value="1"/>
</dbReference>
<dbReference type="InterPro" id="IPR039723">
    <property type="entry name" value="Vps71/ZNHIT1"/>
</dbReference>
<dbReference type="InterPro" id="IPR007529">
    <property type="entry name" value="Znf_HIT"/>
</dbReference>
<dbReference type="PANTHER" id="PTHR13093">
    <property type="entry name" value="ZINC FINGER HIT DOMAIN CONTAINING PROTEIN 1"/>
    <property type="match status" value="1"/>
</dbReference>
<dbReference type="PROSITE" id="PS51083">
    <property type="entry name" value="ZF_HIT"/>
    <property type="match status" value="1"/>
</dbReference>
<gene>
    <name type="primary">VPS71</name>
    <name type="synonym">SWC6</name>
    <name type="ordered locus">YML041C</name>
    <name type="ORF">YM8054.02C</name>
</gene>
<name>VPS71_YEAST</name>
<protein>
    <recommendedName>
        <fullName>Vacuolar protein sorting-associated protein 71</fullName>
    </recommendedName>
    <alternativeName>
        <fullName>SWR complex protein 6</fullName>
    </alternativeName>
</protein>
<comment type="function">
    <text evidence="3 5 6 7">Participates in the catalytic exchange of histone H2A for the H2A variant HZT1, an euchromatin-specific factor, leading to chromatin remodeling and changes in transcription of targeted genes. Indirectly involved in vacuolar protein sorting.</text>
</comment>
<comment type="subunit">
    <text>Belongs to the SWR1 complex at least composed of ACT1, ARP4, RVB1, RVB2, ARP6, YAF9, VPS71, VPS72, SWC3, SWC4, SWC5, SWR1 and HTZ1.</text>
</comment>
<comment type="interaction">
    <interactant intactId="EBI-27814">
        <id>Q03433</id>
    </interactant>
    <interactant intactId="EBI-2957">
        <id>Q12509</id>
        <label>ARP6</label>
    </interactant>
    <organismsDiffer>false</organismsDiffer>
    <experiments>4</experiments>
</comment>
<comment type="interaction">
    <interactant intactId="EBI-27814">
        <id>Q03433</id>
    </interactant>
    <interactant intactId="EBI-3493">
        <id>P35817</id>
        <label>BDF1</label>
    </interactant>
    <organismsDiffer>false</organismsDiffer>
    <experiments>3</experiments>
</comment>
<comment type="interaction">
    <interactant intactId="EBI-27814">
        <id>Q03433</id>
    </interactant>
    <interactant intactId="EBI-8080">
        <id>Q12692</id>
        <label>HTZ1</label>
    </interactant>
    <organismsDiffer>false</organismsDiffer>
    <experiments>7</experiments>
</comment>
<comment type="subcellular location">
    <subcellularLocation>
        <location evidence="4">Nucleus</location>
    </subcellularLocation>
</comment>
<sequence>MKALVEEIDKKTYNPDIYFTSLDPQARRYTSKKINKQGTISTSRPVKRINYSLADLEARLYTSRSEGDGNSISRQDDRNSKNSHSFEERYTQQEILQSDRRFMELNTENFSDLPNVPTLLSDLTGVPRDRIESTTKPISQTSDGLSALMGGSSFVKEHSKYGHGWVLKPETLREIQLSYKSTKLPKPKRKNTNRIVALKKVLSSKRNLHSFLDSALLNLMDKNVIYHNVYNKRYFKVLPLITTCSICGGYDSISSCVNCGNKICSVSCFKLHNETRCRNR</sequence>